<dbReference type="EC" id="3.5.1.5" evidence="1"/>
<dbReference type="EMBL" id="CP001217">
    <property type="protein sequence ID" value="ACJ07236.1"/>
    <property type="molecule type" value="Genomic_DNA"/>
</dbReference>
<dbReference type="SMR" id="B6JPH5"/>
<dbReference type="MEROPS" id="M38.982"/>
<dbReference type="KEGG" id="hpp:HPP12_0076"/>
<dbReference type="HOGENOM" id="CLU_000980_0_0_7"/>
<dbReference type="UniPathway" id="UPA00258">
    <property type="reaction ID" value="UER00370"/>
</dbReference>
<dbReference type="Proteomes" id="UP000008198">
    <property type="component" value="Chromosome"/>
</dbReference>
<dbReference type="GO" id="GO:0005737">
    <property type="term" value="C:cytoplasm"/>
    <property type="evidence" value="ECO:0007669"/>
    <property type="project" value="UniProtKB-SubCell"/>
</dbReference>
<dbReference type="GO" id="GO:0016151">
    <property type="term" value="F:nickel cation binding"/>
    <property type="evidence" value="ECO:0007669"/>
    <property type="project" value="UniProtKB-UniRule"/>
</dbReference>
<dbReference type="GO" id="GO:0009039">
    <property type="term" value="F:urease activity"/>
    <property type="evidence" value="ECO:0007669"/>
    <property type="project" value="UniProtKB-UniRule"/>
</dbReference>
<dbReference type="GO" id="GO:0043419">
    <property type="term" value="P:urea catabolic process"/>
    <property type="evidence" value="ECO:0007669"/>
    <property type="project" value="UniProtKB-UniRule"/>
</dbReference>
<dbReference type="CDD" id="cd00375">
    <property type="entry name" value="Urease_alpha"/>
    <property type="match status" value="1"/>
</dbReference>
<dbReference type="Gene3D" id="3.20.20.140">
    <property type="entry name" value="Metal-dependent hydrolases"/>
    <property type="match status" value="1"/>
</dbReference>
<dbReference type="Gene3D" id="2.30.40.10">
    <property type="entry name" value="Urease, subunit C, domain 1"/>
    <property type="match status" value="1"/>
</dbReference>
<dbReference type="HAMAP" id="MF_01953">
    <property type="entry name" value="Urease_alpha"/>
    <property type="match status" value="1"/>
</dbReference>
<dbReference type="InterPro" id="IPR006680">
    <property type="entry name" value="Amidohydro-rel"/>
</dbReference>
<dbReference type="InterPro" id="IPR011059">
    <property type="entry name" value="Metal-dep_hydrolase_composite"/>
</dbReference>
<dbReference type="InterPro" id="IPR032466">
    <property type="entry name" value="Metal_Hydrolase"/>
</dbReference>
<dbReference type="InterPro" id="IPR011612">
    <property type="entry name" value="Urease_alpha_N_dom"/>
</dbReference>
<dbReference type="InterPro" id="IPR050112">
    <property type="entry name" value="Urease_alpha_subunit"/>
</dbReference>
<dbReference type="InterPro" id="IPR017950">
    <property type="entry name" value="Urease_AS"/>
</dbReference>
<dbReference type="InterPro" id="IPR005848">
    <property type="entry name" value="Urease_asu"/>
</dbReference>
<dbReference type="InterPro" id="IPR017951">
    <property type="entry name" value="Urease_asu_c"/>
</dbReference>
<dbReference type="InterPro" id="IPR029754">
    <property type="entry name" value="Urease_Ni-bd"/>
</dbReference>
<dbReference type="NCBIfam" id="NF009686">
    <property type="entry name" value="PRK13207.1"/>
    <property type="match status" value="1"/>
</dbReference>
<dbReference type="NCBIfam" id="NF010591">
    <property type="entry name" value="PRK13985.1"/>
    <property type="match status" value="1"/>
</dbReference>
<dbReference type="NCBIfam" id="TIGR01792">
    <property type="entry name" value="urease_alph"/>
    <property type="match status" value="1"/>
</dbReference>
<dbReference type="PANTHER" id="PTHR43440">
    <property type="entry name" value="UREASE"/>
    <property type="match status" value="1"/>
</dbReference>
<dbReference type="PANTHER" id="PTHR43440:SF1">
    <property type="entry name" value="UREASE"/>
    <property type="match status" value="1"/>
</dbReference>
<dbReference type="Pfam" id="PF01979">
    <property type="entry name" value="Amidohydro_1"/>
    <property type="match status" value="1"/>
</dbReference>
<dbReference type="Pfam" id="PF00449">
    <property type="entry name" value="Urease_alpha"/>
    <property type="match status" value="1"/>
</dbReference>
<dbReference type="PRINTS" id="PR01752">
    <property type="entry name" value="UREASE"/>
</dbReference>
<dbReference type="SUPFAM" id="SSF51338">
    <property type="entry name" value="Composite domain of metallo-dependent hydrolases"/>
    <property type="match status" value="2"/>
</dbReference>
<dbReference type="SUPFAM" id="SSF51556">
    <property type="entry name" value="Metallo-dependent hydrolases"/>
    <property type="match status" value="1"/>
</dbReference>
<dbReference type="PROSITE" id="PS01120">
    <property type="entry name" value="UREASE_1"/>
    <property type="match status" value="1"/>
</dbReference>
<dbReference type="PROSITE" id="PS00145">
    <property type="entry name" value="UREASE_2"/>
    <property type="match status" value="1"/>
</dbReference>
<dbReference type="PROSITE" id="PS51368">
    <property type="entry name" value="UREASE_3"/>
    <property type="match status" value="1"/>
</dbReference>
<reference key="1">
    <citation type="submission" date="2008-10" db="EMBL/GenBank/DDBJ databases">
        <title>The complete genome sequence of Helicobacter pylori strain P12.</title>
        <authorList>
            <person name="Fischer W."/>
            <person name="Windhager L."/>
            <person name="Karnholz A."/>
            <person name="Zeiller M."/>
            <person name="Zimmer R."/>
            <person name="Haas R."/>
        </authorList>
    </citation>
    <scope>NUCLEOTIDE SEQUENCE [LARGE SCALE GENOMIC DNA]</scope>
    <source>
        <strain>P12</strain>
    </source>
</reference>
<comment type="catalytic activity">
    <reaction evidence="1">
        <text>urea + 2 H2O + H(+) = hydrogencarbonate + 2 NH4(+)</text>
        <dbReference type="Rhea" id="RHEA:20557"/>
        <dbReference type="ChEBI" id="CHEBI:15377"/>
        <dbReference type="ChEBI" id="CHEBI:15378"/>
        <dbReference type="ChEBI" id="CHEBI:16199"/>
        <dbReference type="ChEBI" id="CHEBI:17544"/>
        <dbReference type="ChEBI" id="CHEBI:28938"/>
        <dbReference type="EC" id="3.5.1.5"/>
    </reaction>
</comment>
<comment type="cofactor">
    <cofactor evidence="1">
        <name>Ni cation</name>
        <dbReference type="ChEBI" id="CHEBI:25516"/>
    </cofactor>
    <text evidence="1">Binds 2 nickel ions per subunit.</text>
</comment>
<comment type="pathway">
    <text evidence="1">Nitrogen metabolism; urea degradation; CO(2) and NH(3) from urea (urease route): step 1/1.</text>
</comment>
<comment type="subunit">
    <text evidence="1">Heterohexamer of 3 UreA (alpha) and 3 UreB (beta) subunits.</text>
</comment>
<comment type="subcellular location">
    <subcellularLocation>
        <location evidence="1">Cytoplasm</location>
    </subcellularLocation>
</comment>
<comment type="PTM">
    <text evidence="1">Carboxylation allows a single lysine to coordinate two nickel ions.</text>
</comment>
<comment type="similarity">
    <text evidence="1">Belongs to the metallo-dependent hydrolases superfamily. Urease alpha subunit family.</text>
</comment>
<comment type="caution">
    <text evidence="2">The orthologous protein is known as the alpha subunit (UreC) in most other bacteria.</text>
</comment>
<proteinExistence type="inferred from homology"/>
<gene>
    <name evidence="1" type="primary">ureB</name>
    <name type="ordered locus">HPP12_0076</name>
</gene>
<accession>B6JPH5</accession>
<organism>
    <name type="scientific">Helicobacter pylori (strain P12)</name>
    <dbReference type="NCBI Taxonomy" id="570508"/>
    <lineage>
        <taxon>Bacteria</taxon>
        <taxon>Pseudomonadati</taxon>
        <taxon>Campylobacterota</taxon>
        <taxon>Epsilonproteobacteria</taxon>
        <taxon>Campylobacterales</taxon>
        <taxon>Helicobacteraceae</taxon>
        <taxon>Helicobacter</taxon>
    </lineage>
</organism>
<keyword id="KW-0963">Cytoplasm</keyword>
<keyword id="KW-0378">Hydrolase</keyword>
<keyword id="KW-0479">Metal-binding</keyword>
<keyword id="KW-0533">Nickel</keyword>
<sequence>MKKISRKEYVSMYGPTTGDKVRLGDTDLIAEVEHDYTIYGEELKFGGGKTLREGMSQSNNPSKEELDLIITNALIVDYTGIYKADIGIKDGKIAGIGKGGNKDMQDGVKNNLSVGPATEALAGEGLIVTAGGIDTHIHFISPQQIPTAFASGVTTMIGGGTGPADGTNATTITPGRRNLKWMLRAAEEYSMNLGFLAKGNTSNDASLADQIEAGAIGFKIHEDWGTTPSAINHALDVADKYDVQVAIHTDTLNEAGCVEDTMAAIAGRTMHTFHTEGAGGGHAPDIIKVAGEHNILPASTNPTIPFTVNTEAEHMDMLMVCHHLDKSIKEDVQFADSRIRPQTIAAEDTLHDMGIFSITSSDSQAMGRVGEVITRTWQTADKNKKEFGRLKEEKGDNDNFRIKRYLSKYTINPAIAHGISEYVGSVEVGKVADLVLWSPAFFGVKPNMIIKGGFIALSQMGDANASIPTPQPVYYREMFAHHGKAKYDANITFVSQAAYDKGIKEELGLERQVLPVKNCRNITKKDMQFNDTTAHIEVNPETYHVFVDGKEVTSKPANKVSLAQLFSIF</sequence>
<evidence type="ECO:0000255" key="1">
    <source>
        <dbReference type="HAMAP-Rule" id="MF_01953"/>
    </source>
</evidence>
<evidence type="ECO:0000305" key="2"/>
<protein>
    <recommendedName>
        <fullName evidence="1">Urease subunit beta</fullName>
        <ecNumber evidence="1">3.5.1.5</ecNumber>
    </recommendedName>
    <alternativeName>
        <fullName evidence="1">Urea amidohydrolase subunit beta</fullName>
    </alternativeName>
</protein>
<name>URE1_HELP2</name>
<feature type="chain" id="PRO_1000188874" description="Urease subunit beta">
    <location>
        <begin position="1"/>
        <end position="569"/>
    </location>
</feature>
<feature type="domain" description="Urease" evidence="1">
    <location>
        <begin position="131"/>
        <end position="569"/>
    </location>
</feature>
<feature type="active site" description="Proton donor" evidence="1">
    <location>
        <position position="322"/>
    </location>
</feature>
<feature type="binding site" evidence="1">
    <location>
        <position position="136"/>
    </location>
    <ligand>
        <name>Ni(2+)</name>
        <dbReference type="ChEBI" id="CHEBI:49786"/>
        <label>1</label>
    </ligand>
</feature>
<feature type="binding site" evidence="1">
    <location>
        <position position="138"/>
    </location>
    <ligand>
        <name>Ni(2+)</name>
        <dbReference type="ChEBI" id="CHEBI:49786"/>
        <label>1</label>
    </ligand>
</feature>
<feature type="binding site" description="via carbamate group" evidence="1">
    <location>
        <position position="219"/>
    </location>
    <ligand>
        <name>Ni(2+)</name>
        <dbReference type="ChEBI" id="CHEBI:49786"/>
        <label>1</label>
    </ligand>
</feature>
<feature type="binding site" description="via carbamate group" evidence="1">
    <location>
        <position position="219"/>
    </location>
    <ligand>
        <name>Ni(2+)</name>
        <dbReference type="ChEBI" id="CHEBI:49786"/>
        <label>2</label>
    </ligand>
</feature>
<feature type="binding site" evidence="1">
    <location>
        <position position="221"/>
    </location>
    <ligand>
        <name>substrate</name>
    </ligand>
</feature>
<feature type="binding site" evidence="1">
    <location>
        <position position="248"/>
    </location>
    <ligand>
        <name>Ni(2+)</name>
        <dbReference type="ChEBI" id="CHEBI:49786"/>
        <label>2</label>
    </ligand>
</feature>
<feature type="binding site" evidence="1">
    <location>
        <position position="274"/>
    </location>
    <ligand>
        <name>Ni(2+)</name>
        <dbReference type="ChEBI" id="CHEBI:49786"/>
        <label>2</label>
    </ligand>
</feature>
<feature type="binding site" evidence="1">
    <location>
        <position position="362"/>
    </location>
    <ligand>
        <name>Ni(2+)</name>
        <dbReference type="ChEBI" id="CHEBI:49786"/>
        <label>1</label>
    </ligand>
</feature>
<feature type="modified residue" description="N6-carboxylysine" evidence="1">
    <location>
        <position position="219"/>
    </location>
</feature>